<feature type="chain" id="PRO_0000333157" description="Na(+)/H(+) antiporter NhaB">
    <location>
        <begin position="1"/>
        <end position="524"/>
    </location>
</feature>
<feature type="transmembrane region" description="Helical" evidence="1">
    <location>
        <begin position="13"/>
        <end position="33"/>
    </location>
</feature>
<feature type="transmembrane region" description="Helical" evidence="1">
    <location>
        <begin position="98"/>
        <end position="118"/>
    </location>
</feature>
<feature type="transmembrane region" description="Helical" evidence="1">
    <location>
        <begin position="140"/>
        <end position="160"/>
    </location>
</feature>
<feature type="transmembrane region" description="Helical" evidence="1">
    <location>
        <begin position="239"/>
        <end position="259"/>
    </location>
</feature>
<feature type="transmembrane region" description="Helical" evidence="1">
    <location>
        <begin position="304"/>
        <end position="324"/>
    </location>
</feature>
<feature type="transmembrane region" description="Helical" evidence="1">
    <location>
        <begin position="325"/>
        <end position="345"/>
    </location>
</feature>
<feature type="transmembrane region" description="Helical" evidence="1">
    <location>
        <begin position="358"/>
        <end position="378"/>
    </location>
</feature>
<feature type="transmembrane region" description="Helical" evidence="1">
    <location>
        <begin position="448"/>
        <end position="468"/>
    </location>
</feature>
<feature type="transmembrane region" description="Helical" evidence="1">
    <location>
        <begin position="479"/>
        <end position="499"/>
    </location>
</feature>
<accession>Q66AQ9</accession>
<proteinExistence type="inferred from homology"/>
<comment type="function">
    <text evidence="1">Na(+)/H(+) antiporter that extrudes sodium in exchange for external protons.</text>
</comment>
<comment type="catalytic activity">
    <reaction evidence="1">
        <text>2 Na(+)(in) + 3 H(+)(out) = 2 Na(+)(out) + 3 H(+)(in)</text>
        <dbReference type="Rhea" id="RHEA:29247"/>
        <dbReference type="ChEBI" id="CHEBI:15378"/>
        <dbReference type="ChEBI" id="CHEBI:29101"/>
    </reaction>
    <physiologicalReaction direction="left-to-right" evidence="1">
        <dbReference type="Rhea" id="RHEA:29248"/>
    </physiologicalReaction>
</comment>
<comment type="subcellular location">
    <subcellularLocation>
        <location evidence="1">Cell inner membrane</location>
        <topology evidence="1">Multi-pass membrane protein</topology>
    </subcellularLocation>
</comment>
<comment type="similarity">
    <text evidence="1">Belongs to the NhaB Na(+)/H(+) (TC 2.A.34) antiporter family.</text>
</comment>
<sequence length="524" mass="57449">MDITNRQAVLKNFLGNSPDWYKLAIMGFLIINPLVFFFVSPFVAGWMLVIEFIFTLAMALKCYPLQPGGLLAIQAVAIGMTSPHQVAEEIANNLEVLLLLVFMVAGIYFMKQLLLFVFTKLLLNIRSKTILSLAFCLASAFLSAFLDALTVIAVVISVSVGFYTIYHNVTSNHSDKDITDDSGIDNQDSHETLEQFRAFLRSLMMHAGVGTALGGVMTMVGEPQNLIIAKSAGWNFADFFIRMLPVTLPVFIFGLLVCLLVEKFKLFGYGAQLPERVRQVLTEYDQQASAKRTKQEKMKLIVQAIIGVWLVLALALHLAEVGLVGLSVIILATSFCGITNEHSLGKAFQEALPFTALLTVFFAVVAVIIEQSLFTPIIQFVLQASPSAQLSLFYLFNGLLSSVSDNVFVGTVYINEARSAFEHGIVSLQQFELLAVAINTGTNLPSVATPNGQAAFLFLLTSALAPLIRLSYGRMVYMALPYTLVMTIVGLLGVEFLLVPMTEWLTQAGWISLPHITNGVAIPH</sequence>
<name>NHAB_YERPS</name>
<keyword id="KW-0050">Antiport</keyword>
<keyword id="KW-0997">Cell inner membrane</keyword>
<keyword id="KW-1003">Cell membrane</keyword>
<keyword id="KW-0406">Ion transport</keyword>
<keyword id="KW-0472">Membrane</keyword>
<keyword id="KW-0915">Sodium</keyword>
<keyword id="KW-0739">Sodium transport</keyword>
<keyword id="KW-0812">Transmembrane</keyword>
<keyword id="KW-1133">Transmembrane helix</keyword>
<keyword id="KW-0813">Transport</keyword>
<gene>
    <name evidence="1" type="primary">nhaB</name>
    <name type="ordered locus">YPTB2071</name>
</gene>
<reference key="1">
    <citation type="journal article" date="2004" name="Proc. Natl. Acad. Sci. U.S.A.">
        <title>Insights into the evolution of Yersinia pestis through whole-genome comparison with Yersinia pseudotuberculosis.</title>
        <authorList>
            <person name="Chain P.S.G."/>
            <person name="Carniel E."/>
            <person name="Larimer F.W."/>
            <person name="Lamerdin J."/>
            <person name="Stoutland P.O."/>
            <person name="Regala W.M."/>
            <person name="Georgescu A.M."/>
            <person name="Vergez L.M."/>
            <person name="Land M.L."/>
            <person name="Motin V.L."/>
            <person name="Brubaker R.R."/>
            <person name="Fowler J."/>
            <person name="Hinnebusch J."/>
            <person name="Marceau M."/>
            <person name="Medigue C."/>
            <person name="Simonet M."/>
            <person name="Chenal-Francisque V."/>
            <person name="Souza B."/>
            <person name="Dacheux D."/>
            <person name="Elliott J.M."/>
            <person name="Derbise A."/>
            <person name="Hauser L.J."/>
            <person name="Garcia E."/>
        </authorList>
    </citation>
    <scope>NUCLEOTIDE SEQUENCE [LARGE SCALE GENOMIC DNA]</scope>
    <source>
        <strain>IP32953</strain>
    </source>
</reference>
<protein>
    <recommendedName>
        <fullName evidence="1">Na(+)/H(+) antiporter NhaB</fullName>
    </recommendedName>
    <alternativeName>
        <fullName evidence="1">Sodium/proton antiporter NhaB</fullName>
    </alternativeName>
</protein>
<evidence type="ECO:0000255" key="1">
    <source>
        <dbReference type="HAMAP-Rule" id="MF_01599"/>
    </source>
</evidence>
<dbReference type="EMBL" id="BX936398">
    <property type="protein sequence ID" value="CAH21309.1"/>
    <property type="molecule type" value="Genomic_DNA"/>
</dbReference>
<dbReference type="RefSeq" id="WP_011192424.1">
    <property type="nucleotide sequence ID" value="NC_006155.1"/>
</dbReference>
<dbReference type="SMR" id="Q66AQ9"/>
<dbReference type="GeneID" id="49785937"/>
<dbReference type="KEGG" id="ypo:BZ17_393"/>
<dbReference type="KEGG" id="yps:YPTB2071"/>
<dbReference type="PATRIC" id="fig|273123.14.peg.420"/>
<dbReference type="Proteomes" id="UP000001011">
    <property type="component" value="Chromosome"/>
</dbReference>
<dbReference type="GO" id="GO:0005886">
    <property type="term" value="C:plasma membrane"/>
    <property type="evidence" value="ECO:0007669"/>
    <property type="project" value="UniProtKB-SubCell"/>
</dbReference>
<dbReference type="GO" id="GO:0015385">
    <property type="term" value="F:sodium:proton antiporter activity"/>
    <property type="evidence" value="ECO:0007669"/>
    <property type="project" value="InterPro"/>
</dbReference>
<dbReference type="HAMAP" id="MF_01599">
    <property type="entry name" value="NhaB"/>
    <property type="match status" value="1"/>
</dbReference>
<dbReference type="InterPro" id="IPR004671">
    <property type="entry name" value="Na+/H+_antiporter_NhaB"/>
</dbReference>
<dbReference type="NCBIfam" id="TIGR00774">
    <property type="entry name" value="NhaB"/>
    <property type="match status" value="1"/>
</dbReference>
<dbReference type="NCBIfam" id="NF007093">
    <property type="entry name" value="PRK09547.1"/>
    <property type="match status" value="1"/>
</dbReference>
<dbReference type="PANTHER" id="PTHR43302:SF1">
    <property type="entry name" value="NA(+)_H(+) ANTIPORTER NHAB"/>
    <property type="match status" value="1"/>
</dbReference>
<dbReference type="PANTHER" id="PTHR43302">
    <property type="entry name" value="TRANSPORTER ARSB-RELATED"/>
    <property type="match status" value="1"/>
</dbReference>
<dbReference type="Pfam" id="PF06450">
    <property type="entry name" value="NhaB"/>
    <property type="match status" value="1"/>
</dbReference>
<organism>
    <name type="scientific">Yersinia pseudotuberculosis serotype I (strain IP32953)</name>
    <dbReference type="NCBI Taxonomy" id="273123"/>
    <lineage>
        <taxon>Bacteria</taxon>
        <taxon>Pseudomonadati</taxon>
        <taxon>Pseudomonadota</taxon>
        <taxon>Gammaproteobacteria</taxon>
        <taxon>Enterobacterales</taxon>
        <taxon>Yersiniaceae</taxon>
        <taxon>Yersinia</taxon>
    </lineage>
</organism>